<accession>Q8ZAL8</accession>
<accession>Q0WAM9</accession>
<gene>
    <name type="primary">rmuC</name>
    <name type="synonym">rumC</name>
    <name type="ordered locus">YPO3782</name>
    <name type="ordered locus">y0448</name>
    <name type="ordered locus">YP_3267</name>
</gene>
<name>RMUC_YERPE</name>
<dbReference type="EMBL" id="AL590842">
    <property type="protein sequence ID" value="CAL22368.1"/>
    <property type="molecule type" value="Genomic_DNA"/>
</dbReference>
<dbReference type="EMBL" id="AE009952">
    <property type="protein sequence ID" value="AAM84037.1"/>
    <property type="status" value="ALT_INIT"/>
    <property type="molecule type" value="Genomic_DNA"/>
</dbReference>
<dbReference type="EMBL" id="AE017042">
    <property type="protein sequence ID" value="AAS63435.1"/>
    <property type="status" value="ALT_INIT"/>
    <property type="molecule type" value="Genomic_DNA"/>
</dbReference>
<dbReference type="PIR" id="AE0460">
    <property type="entry name" value="AE0460"/>
</dbReference>
<dbReference type="RefSeq" id="YP_002348659.1">
    <property type="nucleotide sequence ID" value="NC_003143.1"/>
</dbReference>
<dbReference type="SMR" id="Q8ZAL8"/>
<dbReference type="STRING" id="214092.YPO3782"/>
<dbReference type="PaxDb" id="214092-YPO3782"/>
<dbReference type="DNASU" id="1145395"/>
<dbReference type="EnsemblBacteria" id="AAS63435">
    <property type="protein sequence ID" value="AAS63435"/>
    <property type="gene ID" value="YP_3267"/>
</dbReference>
<dbReference type="KEGG" id="ype:YPO3782"/>
<dbReference type="KEGG" id="ypk:y0448"/>
<dbReference type="KEGG" id="ypm:YP_3267"/>
<dbReference type="PATRIC" id="fig|214092.21.peg.4304"/>
<dbReference type="eggNOG" id="COG1322">
    <property type="taxonomic scope" value="Bacteria"/>
</dbReference>
<dbReference type="HOGENOM" id="CLU_024057_0_1_6"/>
<dbReference type="OrthoDB" id="9765111at2"/>
<dbReference type="Proteomes" id="UP000000815">
    <property type="component" value="Chromosome"/>
</dbReference>
<dbReference type="Proteomes" id="UP000001019">
    <property type="component" value="Chromosome"/>
</dbReference>
<dbReference type="Proteomes" id="UP000002490">
    <property type="component" value="Chromosome"/>
</dbReference>
<dbReference type="GO" id="GO:0006310">
    <property type="term" value="P:DNA recombination"/>
    <property type="evidence" value="ECO:0000318"/>
    <property type="project" value="GO_Central"/>
</dbReference>
<dbReference type="InterPro" id="IPR003798">
    <property type="entry name" value="DNA_recombination_RmuC"/>
</dbReference>
<dbReference type="PANTHER" id="PTHR30563">
    <property type="entry name" value="DNA RECOMBINATION PROTEIN RMUC"/>
    <property type="match status" value="1"/>
</dbReference>
<dbReference type="PANTHER" id="PTHR30563:SF0">
    <property type="entry name" value="DNA RECOMBINATION PROTEIN RMUC"/>
    <property type="match status" value="1"/>
</dbReference>
<dbReference type="Pfam" id="PF02646">
    <property type="entry name" value="RmuC"/>
    <property type="match status" value="1"/>
</dbReference>
<evidence type="ECO:0000250" key="1"/>
<evidence type="ECO:0000255" key="2"/>
<evidence type="ECO:0000256" key="3">
    <source>
        <dbReference type="SAM" id="MobiDB-lite"/>
    </source>
</evidence>
<evidence type="ECO:0000305" key="4"/>
<comment type="function">
    <text evidence="1">Involved in DNA recombination.</text>
</comment>
<comment type="similarity">
    <text evidence="4">Belongs to the RmuC family.</text>
</comment>
<comment type="sequence caution" evidence="4">
    <conflict type="erroneous initiation">
        <sequence resource="EMBL-CDS" id="AAM84037"/>
    </conflict>
</comment>
<comment type="sequence caution" evidence="4">
    <conflict type="erroneous initiation">
        <sequence resource="EMBL-CDS" id="AAS63435"/>
    </conflict>
</comment>
<proteinExistence type="inferred from homology"/>
<reference key="1">
    <citation type="journal article" date="2001" name="Nature">
        <title>Genome sequence of Yersinia pestis, the causative agent of plague.</title>
        <authorList>
            <person name="Parkhill J."/>
            <person name="Wren B.W."/>
            <person name="Thomson N.R."/>
            <person name="Titball R.W."/>
            <person name="Holden M.T.G."/>
            <person name="Prentice M.B."/>
            <person name="Sebaihia M."/>
            <person name="James K.D."/>
            <person name="Churcher C.M."/>
            <person name="Mungall K.L."/>
            <person name="Baker S."/>
            <person name="Basham D."/>
            <person name="Bentley S.D."/>
            <person name="Brooks K."/>
            <person name="Cerdeno-Tarraga A.-M."/>
            <person name="Chillingworth T."/>
            <person name="Cronin A."/>
            <person name="Davies R.M."/>
            <person name="Davis P."/>
            <person name="Dougan G."/>
            <person name="Feltwell T."/>
            <person name="Hamlin N."/>
            <person name="Holroyd S."/>
            <person name="Jagels K."/>
            <person name="Karlyshev A.V."/>
            <person name="Leather S."/>
            <person name="Moule S."/>
            <person name="Oyston P.C.F."/>
            <person name="Quail M.A."/>
            <person name="Rutherford K.M."/>
            <person name="Simmonds M."/>
            <person name="Skelton J."/>
            <person name="Stevens K."/>
            <person name="Whitehead S."/>
            <person name="Barrell B.G."/>
        </authorList>
    </citation>
    <scope>NUCLEOTIDE SEQUENCE [LARGE SCALE GENOMIC DNA]</scope>
    <source>
        <strain>CO-92 / Biovar Orientalis</strain>
    </source>
</reference>
<reference key="2">
    <citation type="journal article" date="2002" name="J. Bacteriol.">
        <title>Genome sequence of Yersinia pestis KIM.</title>
        <authorList>
            <person name="Deng W."/>
            <person name="Burland V."/>
            <person name="Plunkett G. III"/>
            <person name="Boutin A."/>
            <person name="Mayhew G.F."/>
            <person name="Liss P."/>
            <person name="Perna N.T."/>
            <person name="Rose D.J."/>
            <person name="Mau B."/>
            <person name="Zhou S."/>
            <person name="Schwartz D.C."/>
            <person name="Fetherston J.D."/>
            <person name="Lindler L.E."/>
            <person name="Brubaker R.R."/>
            <person name="Plano G.V."/>
            <person name="Straley S.C."/>
            <person name="McDonough K.A."/>
            <person name="Nilles M.L."/>
            <person name="Matson J.S."/>
            <person name="Blattner F.R."/>
            <person name="Perry R.D."/>
        </authorList>
    </citation>
    <scope>NUCLEOTIDE SEQUENCE [LARGE SCALE GENOMIC DNA]</scope>
    <source>
        <strain>KIM10+ / Biovar Mediaevalis</strain>
    </source>
</reference>
<reference key="3">
    <citation type="journal article" date="2004" name="DNA Res.">
        <title>Complete genome sequence of Yersinia pestis strain 91001, an isolate avirulent to humans.</title>
        <authorList>
            <person name="Song Y."/>
            <person name="Tong Z."/>
            <person name="Wang J."/>
            <person name="Wang L."/>
            <person name="Guo Z."/>
            <person name="Han Y."/>
            <person name="Zhang J."/>
            <person name="Pei D."/>
            <person name="Zhou D."/>
            <person name="Qin H."/>
            <person name="Pang X."/>
            <person name="Han Y."/>
            <person name="Zhai J."/>
            <person name="Li M."/>
            <person name="Cui B."/>
            <person name="Qi Z."/>
            <person name="Jin L."/>
            <person name="Dai R."/>
            <person name="Chen F."/>
            <person name="Li S."/>
            <person name="Ye C."/>
            <person name="Du Z."/>
            <person name="Lin W."/>
            <person name="Wang J."/>
            <person name="Yu J."/>
            <person name="Yang H."/>
            <person name="Wang J."/>
            <person name="Huang P."/>
            <person name="Yang R."/>
        </authorList>
    </citation>
    <scope>NUCLEOTIDE SEQUENCE [LARGE SCALE GENOMIC DNA]</scope>
    <source>
        <strain>91001 / Biovar Mediaevalis</strain>
    </source>
</reference>
<feature type="chain" id="PRO_0000202054" description="DNA recombination protein RmuC homolog">
    <location>
        <begin position="1"/>
        <end position="477"/>
    </location>
</feature>
<feature type="region of interest" description="Disordered" evidence="3">
    <location>
        <begin position="458"/>
        <end position="477"/>
    </location>
</feature>
<feature type="coiled-coil region" evidence="2">
    <location>
        <begin position="1"/>
        <end position="211"/>
    </location>
</feature>
<keyword id="KW-0175">Coiled coil</keyword>
<keyword id="KW-0233">DNA recombination</keyword>
<keyword id="KW-1185">Reference proteome</keyword>
<organism>
    <name type="scientific">Yersinia pestis</name>
    <dbReference type="NCBI Taxonomy" id="632"/>
    <lineage>
        <taxon>Bacteria</taxon>
        <taxon>Pseudomonadati</taxon>
        <taxon>Pseudomonadota</taxon>
        <taxon>Gammaproteobacteria</taxon>
        <taxon>Enterobacterales</taxon>
        <taxon>Yersiniaceae</taxon>
        <taxon>Yersinia</taxon>
    </lineage>
</organism>
<sequence>MSQQRTKAQQDIERRLLEQALQQAQQSIATLQMTQQRNEQQLRQSELEQRNLHSQLAANSEKLQQLAHWRNECEQLNQELRAQREINSAQEAELREVTIRLEETRLATEEKQRLLLNSEQRLTTQFENLANRIFEQTGRRADEQNKQSLDRLLLPLREQLDGFRRQVQDSFGQEARERHTLTHEIRNLQQLNAQMAREALNLTKALKGDNKTQGNWGEVVLAKVLEASGLREGHEYQTQVSVKIDQTSRMQPDVIVRLPQGKDVVIDAKMSLVAYERYFNSEDDAEREVALNEHLSSLRGHIRMLGRKDYQQLPGLRSLDYVLMFIPVEPAFLVAIDRQPELINEALQHNIMLVSPTTLLVALRTITNLWRYEHQSQNAQRIAERAARLYDKVRLFVDDMASLGQSLDKAQLSYHQAMNKLSQGRGNLVGQVESFRTLGVEVKRPISPLLAEKACAEHQPEGDLALSDDAESGAFPE</sequence>
<protein>
    <recommendedName>
        <fullName>DNA recombination protein RmuC homolog</fullName>
    </recommendedName>
</protein>